<keyword id="KW-1185">Reference proteome</keyword>
<keyword id="KW-0687">Ribonucleoprotein</keyword>
<keyword id="KW-0689">Ribosomal protein</keyword>
<keyword id="KW-0694">RNA-binding</keyword>
<keyword id="KW-0699">rRNA-binding</keyword>
<sequence length="149" mass="16004">MRLHTLQPAPGAKSTRKRVGRGTSSGHGKTSGFGHKGQKARSGRVGKRGFEGGQTPLYKKLPKIMRFKNYPFKIEYEVVNVEKLNRFDSGTVVDIGTLVDTGLVSSLSAKVKILGQGEITKALQVKVHAISKSAKEKIEAAGGSVEVVD</sequence>
<accession>B5Y969</accession>
<protein>
    <recommendedName>
        <fullName evidence="1">Large ribosomal subunit protein uL15</fullName>
    </recommendedName>
    <alternativeName>
        <fullName evidence="3">50S ribosomal protein L15</fullName>
    </alternativeName>
</protein>
<evidence type="ECO:0000255" key="1">
    <source>
        <dbReference type="HAMAP-Rule" id="MF_01341"/>
    </source>
</evidence>
<evidence type="ECO:0000256" key="2">
    <source>
        <dbReference type="SAM" id="MobiDB-lite"/>
    </source>
</evidence>
<evidence type="ECO:0000305" key="3"/>
<comment type="function">
    <text evidence="1">Binds to the 23S rRNA.</text>
</comment>
<comment type="subunit">
    <text evidence="1">Part of the 50S ribosomal subunit.</text>
</comment>
<comment type="similarity">
    <text evidence="1">Belongs to the universal ribosomal protein uL15 family.</text>
</comment>
<proteinExistence type="inferred from homology"/>
<reference key="1">
    <citation type="submission" date="2008-08" db="EMBL/GenBank/DDBJ databases">
        <title>The complete genome sequence of Coprothermobacter proteolyticus strain ATCC 5245 / DSM 5265 / BT.</title>
        <authorList>
            <person name="Dodson R.J."/>
            <person name="Durkin A.S."/>
            <person name="Wu M."/>
            <person name="Eisen J."/>
            <person name="Sutton G."/>
        </authorList>
    </citation>
    <scope>NUCLEOTIDE SEQUENCE [LARGE SCALE GENOMIC DNA]</scope>
    <source>
        <strain>ATCC 35245 / DSM 5265 / OCM 4 / BT</strain>
    </source>
</reference>
<dbReference type="EMBL" id="CP001145">
    <property type="protein sequence ID" value="ACI17177.1"/>
    <property type="molecule type" value="Genomic_DNA"/>
</dbReference>
<dbReference type="RefSeq" id="WP_012543829.1">
    <property type="nucleotide sequence ID" value="NC_011295.1"/>
</dbReference>
<dbReference type="SMR" id="B5Y969"/>
<dbReference type="STRING" id="309798.COPRO5265_0994"/>
<dbReference type="KEGG" id="cpo:COPRO5265_0994"/>
<dbReference type="eggNOG" id="COG0200">
    <property type="taxonomic scope" value="Bacteria"/>
</dbReference>
<dbReference type="HOGENOM" id="CLU_055188_4_2_9"/>
<dbReference type="OrthoDB" id="9810293at2"/>
<dbReference type="Proteomes" id="UP000001732">
    <property type="component" value="Chromosome"/>
</dbReference>
<dbReference type="GO" id="GO:0015934">
    <property type="term" value="C:large ribosomal subunit"/>
    <property type="evidence" value="ECO:0007669"/>
    <property type="project" value="InterPro"/>
</dbReference>
<dbReference type="GO" id="GO:0019843">
    <property type="term" value="F:rRNA binding"/>
    <property type="evidence" value="ECO:0007669"/>
    <property type="project" value="UniProtKB-UniRule"/>
</dbReference>
<dbReference type="GO" id="GO:0003735">
    <property type="term" value="F:structural constituent of ribosome"/>
    <property type="evidence" value="ECO:0007669"/>
    <property type="project" value="InterPro"/>
</dbReference>
<dbReference type="GO" id="GO:0006412">
    <property type="term" value="P:translation"/>
    <property type="evidence" value="ECO:0007669"/>
    <property type="project" value="UniProtKB-UniRule"/>
</dbReference>
<dbReference type="FunFam" id="3.100.10.10:FF:000005">
    <property type="entry name" value="50S ribosomal protein L15"/>
    <property type="match status" value="1"/>
</dbReference>
<dbReference type="Gene3D" id="3.100.10.10">
    <property type="match status" value="1"/>
</dbReference>
<dbReference type="HAMAP" id="MF_01341">
    <property type="entry name" value="Ribosomal_uL15"/>
    <property type="match status" value="1"/>
</dbReference>
<dbReference type="InterPro" id="IPR030878">
    <property type="entry name" value="Ribosomal_uL15"/>
</dbReference>
<dbReference type="InterPro" id="IPR021131">
    <property type="entry name" value="Ribosomal_uL15/eL18"/>
</dbReference>
<dbReference type="InterPro" id="IPR036227">
    <property type="entry name" value="Ribosomal_uL15/eL18_sf"/>
</dbReference>
<dbReference type="InterPro" id="IPR005749">
    <property type="entry name" value="Ribosomal_uL15_bac-type"/>
</dbReference>
<dbReference type="InterPro" id="IPR001196">
    <property type="entry name" value="Ribosomal_uL15_CS"/>
</dbReference>
<dbReference type="NCBIfam" id="TIGR01071">
    <property type="entry name" value="rplO_bact"/>
    <property type="match status" value="1"/>
</dbReference>
<dbReference type="PANTHER" id="PTHR12934">
    <property type="entry name" value="50S RIBOSOMAL PROTEIN L15"/>
    <property type="match status" value="1"/>
</dbReference>
<dbReference type="PANTHER" id="PTHR12934:SF11">
    <property type="entry name" value="LARGE RIBOSOMAL SUBUNIT PROTEIN UL15M"/>
    <property type="match status" value="1"/>
</dbReference>
<dbReference type="Pfam" id="PF00828">
    <property type="entry name" value="Ribosomal_L27A"/>
    <property type="match status" value="1"/>
</dbReference>
<dbReference type="SUPFAM" id="SSF52080">
    <property type="entry name" value="Ribosomal proteins L15p and L18e"/>
    <property type="match status" value="1"/>
</dbReference>
<dbReference type="PROSITE" id="PS00475">
    <property type="entry name" value="RIBOSOMAL_L15"/>
    <property type="match status" value="1"/>
</dbReference>
<gene>
    <name evidence="1" type="primary">rplO</name>
    <name type="ordered locus">COPRO5265_0994</name>
</gene>
<name>RL15_COPPD</name>
<organism>
    <name type="scientific">Coprothermobacter proteolyticus (strain ATCC 35245 / DSM 5265 / OCM 4 / BT)</name>
    <dbReference type="NCBI Taxonomy" id="309798"/>
    <lineage>
        <taxon>Bacteria</taxon>
        <taxon>Pseudomonadati</taxon>
        <taxon>Coprothermobacterota</taxon>
        <taxon>Coprothermobacteria</taxon>
        <taxon>Coprothermobacterales</taxon>
        <taxon>Coprothermobacteraceae</taxon>
        <taxon>Coprothermobacter</taxon>
    </lineage>
</organism>
<feature type="chain" id="PRO_1000142798" description="Large ribosomal subunit protein uL15">
    <location>
        <begin position="1"/>
        <end position="149"/>
    </location>
</feature>
<feature type="region of interest" description="Disordered" evidence="2">
    <location>
        <begin position="1"/>
        <end position="53"/>
    </location>
</feature>
<feature type="compositionally biased region" description="Gly residues" evidence="2">
    <location>
        <begin position="23"/>
        <end position="35"/>
    </location>
</feature>
<feature type="compositionally biased region" description="Basic residues" evidence="2">
    <location>
        <begin position="36"/>
        <end position="47"/>
    </location>
</feature>